<feature type="chain" id="PRO_0000194937" description="Ubiquitin-like modifier-activating enzyme 7">
    <location>
        <begin position="1"/>
        <end position="1012"/>
    </location>
</feature>
<feature type="repeat" description="1-1">
    <location>
        <begin position="23"/>
        <end position="159"/>
    </location>
</feature>
<feature type="repeat" description="1-2">
    <location>
        <begin position="423"/>
        <end position="575"/>
    </location>
</feature>
<feature type="region of interest" description="2 approximate repeats">
    <location>
        <begin position="23"/>
        <end position="575"/>
    </location>
</feature>
<feature type="active site" description="Glycyl thioester intermediate" evidence="3">
    <location>
        <position position="599"/>
    </location>
</feature>
<feature type="binding site" evidence="1">
    <location>
        <begin position="442"/>
        <end position="471"/>
    </location>
    <ligand>
        <name>ATP</name>
        <dbReference type="ChEBI" id="CHEBI:30616"/>
    </ligand>
</feature>
<feature type="modified residue" description="Phosphoserine" evidence="19">
    <location>
        <position position="266"/>
    </location>
</feature>
<feature type="sequence variant" id="VAR_080759" description="Found in a small consanguineous family with learning disability; uncertain significance." evidence="12">
    <location>
        <begin position="397"/>
        <end position="1012"/>
    </location>
</feature>
<feature type="sequence variant" id="VAR_052434" description="In dbSNP:rs11928913.">
    <original>P</original>
    <variation>S</variation>
    <location>
        <position position="712"/>
    </location>
</feature>
<feature type="sequence variant" id="VAR_047793" description="In dbSNP:rs2230149.">
    <original>H</original>
    <variation>R</variation>
    <location>
        <position position="817"/>
    </location>
</feature>
<feature type="sequence conflict" description="In Ref. 1; AAA75388 and 2; AAG49557." evidence="17" ref="1 2">
    <original>GVLSPMVAMLGAVAAQEVLKAISR</original>
    <variation>RCLEPMVACWVSSCPGSAEGNLQ</variation>
    <location>
        <begin position="355"/>
        <end position="378"/>
    </location>
</feature>
<feature type="helix" evidence="21">
    <location>
        <begin position="25"/>
        <end position="30"/>
    </location>
</feature>
<feature type="strand" evidence="21">
    <location>
        <begin position="34"/>
        <end position="38"/>
    </location>
</feature>
<feature type="helix" evidence="21">
    <location>
        <begin position="42"/>
        <end position="54"/>
    </location>
</feature>
<feature type="strand" evidence="23">
    <location>
        <begin position="57"/>
        <end position="62"/>
    </location>
</feature>
<feature type="helix" evidence="21">
    <location>
        <begin position="69"/>
        <end position="71"/>
    </location>
</feature>
<feature type="turn" evidence="21">
    <location>
        <begin position="72"/>
        <end position="74"/>
    </location>
</feature>
<feature type="helix" evidence="21">
    <location>
        <begin position="80"/>
        <end position="82"/>
    </location>
</feature>
<feature type="strand" evidence="22">
    <location>
        <begin position="84"/>
        <end position="86"/>
    </location>
</feature>
<feature type="helix" evidence="21">
    <location>
        <begin position="87"/>
        <end position="98"/>
    </location>
</feature>
<feature type="strand" evidence="23">
    <location>
        <begin position="100"/>
        <end position="106"/>
    </location>
</feature>
<feature type="helix" evidence="21">
    <location>
        <begin position="113"/>
        <end position="118"/>
    </location>
</feature>
<feature type="strand" evidence="21">
    <location>
        <begin position="120"/>
        <end position="124"/>
    </location>
</feature>
<feature type="helix" evidence="21">
    <location>
        <begin position="129"/>
        <end position="141"/>
    </location>
</feature>
<feature type="strand" evidence="21">
    <location>
        <begin position="145"/>
        <end position="147"/>
    </location>
</feature>
<feature type="strand" evidence="21">
    <location>
        <begin position="150"/>
        <end position="153"/>
    </location>
</feature>
<feature type="strand" evidence="21">
    <location>
        <begin position="155"/>
        <end position="158"/>
    </location>
</feature>
<feature type="strand" evidence="21">
    <location>
        <begin position="164"/>
        <end position="170"/>
    </location>
</feature>
<feature type="strand" evidence="21">
    <location>
        <begin position="172"/>
        <end position="174"/>
    </location>
</feature>
<feature type="strand" evidence="21">
    <location>
        <begin position="178"/>
        <end position="183"/>
    </location>
</feature>
<feature type="strand" evidence="23">
    <location>
        <begin position="187"/>
        <end position="189"/>
    </location>
</feature>
<feature type="strand" evidence="21">
    <location>
        <begin position="191"/>
        <end position="194"/>
    </location>
</feature>
<feature type="helix" evidence="21">
    <location>
        <begin position="198"/>
        <end position="202"/>
    </location>
</feature>
<feature type="strand" evidence="21">
    <location>
        <begin position="208"/>
        <end position="210"/>
    </location>
</feature>
<feature type="strand" evidence="23">
    <location>
        <begin position="214"/>
        <end position="216"/>
    </location>
</feature>
<feature type="turn" evidence="21">
    <location>
        <begin position="218"/>
        <end position="222"/>
    </location>
</feature>
<feature type="turn" evidence="23">
    <location>
        <begin position="232"/>
        <end position="234"/>
    </location>
</feature>
<feature type="strand" evidence="23">
    <location>
        <begin position="235"/>
        <end position="237"/>
    </location>
</feature>
<feature type="strand" evidence="23">
    <location>
        <begin position="247"/>
        <end position="250"/>
    </location>
</feature>
<feature type="strand" evidence="21">
    <location>
        <begin position="252"/>
        <end position="256"/>
    </location>
</feature>
<feature type="strand" evidence="21">
    <location>
        <begin position="260"/>
        <end position="262"/>
    </location>
</feature>
<feature type="helix" evidence="21">
    <location>
        <begin position="267"/>
        <end position="270"/>
    </location>
</feature>
<feature type="helix" evidence="21">
    <location>
        <begin position="281"/>
        <end position="304"/>
    </location>
</feature>
<feature type="helix" evidence="21">
    <location>
        <begin position="313"/>
        <end position="325"/>
    </location>
</feature>
<feature type="helix" evidence="21">
    <location>
        <begin position="328"/>
        <end position="330"/>
    </location>
</feature>
<feature type="strand" evidence="21">
    <location>
        <begin position="333"/>
        <end position="335"/>
    </location>
</feature>
<feature type="helix" evidence="21">
    <location>
        <begin position="343"/>
        <end position="351"/>
    </location>
</feature>
<feature type="strand" evidence="23">
    <location>
        <begin position="354"/>
        <end position="356"/>
    </location>
</feature>
<feature type="helix" evidence="21">
    <location>
        <begin position="358"/>
        <end position="377"/>
    </location>
</feature>
<feature type="strand" evidence="21">
    <location>
        <begin position="385"/>
        <end position="387"/>
    </location>
</feature>
<feature type="helix" evidence="21">
    <location>
        <begin position="392"/>
        <end position="394"/>
    </location>
</feature>
<feature type="strand" evidence="23">
    <location>
        <begin position="398"/>
        <end position="400"/>
    </location>
</feature>
<feature type="turn" evidence="21">
    <location>
        <begin position="405"/>
        <end position="408"/>
    </location>
</feature>
<feature type="helix" evidence="21">
    <location>
        <begin position="416"/>
        <end position="419"/>
    </location>
</feature>
<feature type="helix" evidence="21">
    <location>
        <begin position="424"/>
        <end position="431"/>
    </location>
</feature>
<feature type="strand" evidence="20">
    <location>
        <begin position="434"/>
        <end position="438"/>
    </location>
</feature>
<feature type="helix" evidence="21">
    <location>
        <begin position="442"/>
        <end position="454"/>
    </location>
</feature>
<feature type="turn" evidence="21">
    <location>
        <begin position="455"/>
        <end position="457"/>
    </location>
</feature>
<feature type="strand" evidence="21">
    <location>
        <begin position="459"/>
        <end position="461"/>
    </location>
</feature>
<feature type="strand" evidence="21">
    <location>
        <begin position="463"/>
        <end position="467"/>
    </location>
</feature>
<feature type="turn" evidence="21">
    <location>
        <begin position="474"/>
        <end position="476"/>
    </location>
</feature>
<feature type="helix" evidence="21">
    <location>
        <begin position="477"/>
        <end position="479"/>
    </location>
</feature>
<feature type="strand" evidence="23">
    <location>
        <begin position="481"/>
        <end position="483"/>
    </location>
</feature>
<feature type="helix" evidence="21">
    <location>
        <begin position="485"/>
        <end position="487"/>
    </location>
</feature>
<feature type="helix" evidence="21">
    <location>
        <begin position="492"/>
        <end position="503"/>
    </location>
</feature>
<feature type="strand" evidence="21">
    <location>
        <begin position="509"/>
        <end position="512"/>
    </location>
</feature>
<feature type="helix" evidence="21">
    <location>
        <begin position="518"/>
        <end position="520"/>
    </location>
</feature>
<feature type="turn" evidence="21">
    <location>
        <begin position="521"/>
        <end position="524"/>
    </location>
</feature>
<feature type="helix" evidence="21">
    <location>
        <begin position="526"/>
        <end position="529"/>
    </location>
</feature>
<feature type="strand" evidence="21">
    <location>
        <begin position="535"/>
        <end position="537"/>
    </location>
</feature>
<feature type="helix" evidence="21">
    <location>
        <begin position="542"/>
        <end position="555"/>
    </location>
</feature>
<feature type="strand" evidence="21">
    <location>
        <begin position="559"/>
        <end position="565"/>
    </location>
</feature>
<feature type="strand" evidence="21">
    <location>
        <begin position="568"/>
        <end position="574"/>
    </location>
</feature>
<feature type="turn" evidence="21">
    <location>
        <begin position="576"/>
        <end position="578"/>
    </location>
</feature>
<feature type="helix" evidence="21">
    <location>
        <begin position="586"/>
        <end position="592"/>
    </location>
</feature>
<feature type="helix" evidence="21">
    <location>
        <begin position="598"/>
        <end position="600"/>
    </location>
</feature>
<feature type="helix" evidence="21">
    <location>
        <begin position="608"/>
        <end position="623"/>
    </location>
</feature>
<feature type="helix" evidence="21">
    <location>
        <begin position="625"/>
        <end position="630"/>
    </location>
</feature>
<feature type="helix" evidence="21">
    <location>
        <begin position="632"/>
        <end position="636"/>
    </location>
</feature>
<feature type="turn" evidence="23">
    <location>
        <begin position="640"/>
        <end position="644"/>
    </location>
</feature>
<feature type="helix" evidence="21">
    <location>
        <begin position="645"/>
        <end position="652"/>
    </location>
</feature>
<feature type="turn" evidence="21">
    <location>
        <begin position="654"/>
        <end position="656"/>
    </location>
</feature>
<feature type="strand" evidence="22">
    <location>
        <begin position="667"/>
        <end position="670"/>
    </location>
</feature>
<feature type="helix" evidence="21">
    <location>
        <begin position="671"/>
        <end position="681"/>
    </location>
</feature>
<feature type="helix" evidence="21">
    <location>
        <begin position="683"/>
        <end position="691"/>
    </location>
</feature>
<feature type="strand" evidence="21">
    <location>
        <begin position="699"/>
        <end position="702"/>
    </location>
</feature>
<feature type="strand" evidence="23">
    <location>
        <begin position="704"/>
        <end position="707"/>
    </location>
</feature>
<feature type="strand" evidence="23">
    <location>
        <begin position="719"/>
        <end position="721"/>
    </location>
</feature>
<feature type="helix" evidence="21">
    <location>
        <begin position="723"/>
        <end position="739"/>
    </location>
</feature>
<feature type="turn" evidence="21">
    <location>
        <begin position="747"/>
        <end position="749"/>
    </location>
</feature>
<feature type="helix" evidence="21">
    <location>
        <begin position="751"/>
        <end position="755"/>
    </location>
</feature>
<feature type="helix" evidence="21">
    <location>
        <begin position="761"/>
        <end position="764"/>
    </location>
</feature>
<feature type="helix" evidence="21">
    <location>
        <begin position="765"/>
        <end position="769"/>
    </location>
</feature>
<feature type="strand" evidence="21">
    <location>
        <begin position="770"/>
        <end position="773"/>
    </location>
</feature>
<feature type="turn" evidence="21">
    <location>
        <begin position="778"/>
        <end position="782"/>
    </location>
</feature>
<feature type="helix" evidence="21">
    <location>
        <begin position="783"/>
        <end position="797"/>
    </location>
</feature>
<feature type="turn" evidence="21">
    <location>
        <begin position="813"/>
        <end position="816"/>
    </location>
</feature>
<feature type="helix" evidence="21">
    <location>
        <begin position="817"/>
        <end position="831"/>
    </location>
</feature>
<feature type="helix" evidence="21">
    <location>
        <begin position="839"/>
        <end position="843"/>
    </location>
</feature>
<feature type="strand" evidence="23">
    <location>
        <begin position="845"/>
        <end position="848"/>
    </location>
</feature>
<feature type="helix" evidence="21">
    <location>
        <begin position="854"/>
        <end position="873"/>
    </location>
</feature>
<feature type="helix" evidence="21">
    <location>
        <begin position="878"/>
        <end position="880"/>
    </location>
</feature>
<feature type="strand" evidence="21">
    <location>
        <begin position="883"/>
        <end position="887"/>
    </location>
</feature>
<feature type="helix" evidence="21">
    <location>
        <begin position="888"/>
        <end position="890"/>
    </location>
</feature>
<feature type="strand" evidence="21">
    <location>
        <begin position="892"/>
        <end position="896"/>
    </location>
</feature>
<feature type="strand" evidence="21">
    <location>
        <begin position="904"/>
        <end position="906"/>
    </location>
</feature>
<feature type="strand" evidence="21">
    <location>
        <begin position="909"/>
        <end position="911"/>
    </location>
</feature>
<feature type="strand" evidence="21">
    <location>
        <begin position="917"/>
        <end position="920"/>
    </location>
</feature>
<feature type="turn" evidence="21">
    <location>
        <begin position="922"/>
        <end position="925"/>
    </location>
</feature>
<feature type="helix" evidence="21">
    <location>
        <begin position="928"/>
        <end position="938"/>
    </location>
</feature>
<feature type="strand" evidence="21">
    <location>
        <begin position="943"/>
        <end position="948"/>
    </location>
</feature>
<feature type="strand" evidence="21">
    <location>
        <begin position="951"/>
        <end position="955"/>
    </location>
</feature>
<feature type="strand" evidence="23">
    <location>
        <begin position="956"/>
        <end position="958"/>
    </location>
</feature>
<feature type="helix" evidence="21">
    <location>
        <begin position="960"/>
        <end position="966"/>
    </location>
</feature>
<feature type="strand" evidence="20">
    <location>
        <begin position="967"/>
        <end position="970"/>
    </location>
</feature>
<feature type="helix" evidence="21">
    <location>
        <begin position="971"/>
        <end position="979"/>
    </location>
</feature>
<feature type="strand" evidence="21">
    <location>
        <begin position="989"/>
        <end position="996"/>
    </location>
</feature>
<feature type="turn" evidence="24">
    <location>
        <begin position="1001"/>
        <end position="1003"/>
    </location>
</feature>
<feature type="strand" evidence="21">
    <location>
        <begin position="1008"/>
        <end position="1011"/>
    </location>
</feature>
<evidence type="ECO:0000250" key="1"/>
<evidence type="ECO:0000250" key="2">
    <source>
        <dbReference type="UniProtKB" id="Q9DBK7"/>
    </source>
</evidence>
<evidence type="ECO:0000255" key="3">
    <source>
        <dbReference type="PROSITE-ProRule" id="PRU10132"/>
    </source>
</evidence>
<evidence type="ECO:0000269" key="4">
    <source>
    </source>
</evidence>
<evidence type="ECO:0000269" key="5">
    <source>
    </source>
</evidence>
<evidence type="ECO:0000269" key="6">
    <source>
    </source>
</evidence>
<evidence type="ECO:0000269" key="7">
    <source>
    </source>
</evidence>
<evidence type="ECO:0000269" key="8">
    <source>
    </source>
</evidence>
<evidence type="ECO:0000269" key="9">
    <source>
    </source>
</evidence>
<evidence type="ECO:0000269" key="10">
    <source>
    </source>
</evidence>
<evidence type="ECO:0000269" key="11">
    <source>
    </source>
</evidence>
<evidence type="ECO:0000269" key="12">
    <source>
    </source>
</evidence>
<evidence type="ECO:0000269" key="13">
    <source>
    </source>
</evidence>
<evidence type="ECO:0000269" key="14">
    <source>
    </source>
</evidence>
<evidence type="ECO:0000269" key="15">
    <source>
    </source>
</evidence>
<evidence type="ECO:0000303" key="16">
    <source>
    </source>
</evidence>
<evidence type="ECO:0000305" key="17"/>
<evidence type="ECO:0000312" key="18">
    <source>
        <dbReference type="HGNC" id="HGNC:12471"/>
    </source>
</evidence>
<evidence type="ECO:0007744" key="19">
    <source>
    </source>
</evidence>
<evidence type="ECO:0007829" key="20">
    <source>
        <dbReference type="PDB" id="8OIF"/>
    </source>
</evidence>
<evidence type="ECO:0007829" key="21">
    <source>
        <dbReference type="PDB" id="8SE9"/>
    </source>
</evidence>
<evidence type="ECO:0007829" key="22">
    <source>
        <dbReference type="PDB" id="8SEA"/>
    </source>
</evidence>
<evidence type="ECO:0007829" key="23">
    <source>
        <dbReference type="PDB" id="8SV8"/>
    </source>
</evidence>
<evidence type="ECO:0007829" key="24">
    <source>
        <dbReference type="PDB" id="8WWX"/>
    </source>
</evidence>
<gene>
    <name evidence="16 18" type="primary">UBA7</name>
    <name type="synonym">UBE1L</name>
    <name type="synonym">UBE2</name>
</gene>
<reference key="1">
    <citation type="journal article" date="1993" name="Proc. Natl. Acad. Sci. U.S.A.">
        <title>A gene in the chromosomal region 3p21 with greatly reduced expression in lung cancer is similar to the gene for ubiquitin-activating enzyme.</title>
        <authorList>
            <person name="Kok K."/>
            <person name="Hofstra R."/>
            <person name="Pilz A."/>
            <person name="van den Berg A."/>
            <person name="Terpstra P."/>
            <person name="Buys C.H.C.M."/>
            <person name="Carritt B."/>
        </authorList>
    </citation>
    <scope>NUCLEOTIDE SEQUENCE [MRNA]</scope>
    <source>
        <tissue>B-cell</tissue>
    </source>
</reference>
<reference key="2">
    <citation type="journal article" date="1995" name="Gene Expr.">
        <title>The genomic structure of the human UBE1L gene.</title>
        <authorList>
            <person name="Kok K."/>
            <person name="Van den Berg A."/>
            <person name="Veldhuis P.M."/>
            <person name="Franke M."/>
            <person name="Terpstra P."/>
            <person name="Buys C.H.C.M."/>
        </authorList>
    </citation>
    <scope>NUCLEOTIDE SEQUENCE [GENOMIC DNA]</scope>
</reference>
<reference key="3">
    <citation type="submission" date="2003-05" db="EMBL/GenBank/DDBJ databases">
        <title>Cloning of human full-length CDSs in BD Creator(TM) system donor vector.</title>
        <authorList>
            <person name="Kalnine N."/>
            <person name="Chen X."/>
            <person name="Rolfs A."/>
            <person name="Halleck A."/>
            <person name="Hines L."/>
            <person name="Eisenstein S."/>
            <person name="Koundinya M."/>
            <person name="Raphael J."/>
            <person name="Moreira D."/>
            <person name="Kelley T."/>
            <person name="LaBaer J."/>
            <person name="Lin Y."/>
            <person name="Phelan M."/>
            <person name="Farmer A."/>
        </authorList>
    </citation>
    <scope>NUCLEOTIDE SEQUENCE [LARGE SCALE MRNA]</scope>
</reference>
<reference key="4">
    <citation type="submission" date="2005-07" db="EMBL/GenBank/DDBJ databases">
        <authorList>
            <person name="Mural R.J."/>
            <person name="Istrail S."/>
            <person name="Sutton G.G."/>
            <person name="Florea L."/>
            <person name="Halpern A.L."/>
            <person name="Mobarry C.M."/>
            <person name="Lippert R."/>
            <person name="Walenz B."/>
            <person name="Shatkay H."/>
            <person name="Dew I."/>
            <person name="Miller J.R."/>
            <person name="Flanigan M.J."/>
            <person name="Edwards N.J."/>
            <person name="Bolanos R."/>
            <person name="Fasulo D."/>
            <person name="Halldorsson B.V."/>
            <person name="Hannenhalli S."/>
            <person name="Turner R."/>
            <person name="Yooseph S."/>
            <person name="Lu F."/>
            <person name="Nusskern D.R."/>
            <person name="Shue B.C."/>
            <person name="Zheng X.H."/>
            <person name="Zhong F."/>
            <person name="Delcher A.L."/>
            <person name="Huson D.H."/>
            <person name="Kravitz S.A."/>
            <person name="Mouchard L."/>
            <person name="Reinert K."/>
            <person name="Remington K.A."/>
            <person name="Clark A.G."/>
            <person name="Waterman M.S."/>
            <person name="Eichler E.E."/>
            <person name="Adams M.D."/>
            <person name="Hunkapiller M.W."/>
            <person name="Myers E.W."/>
            <person name="Venter J.C."/>
        </authorList>
    </citation>
    <scope>NUCLEOTIDE SEQUENCE [LARGE SCALE GENOMIC DNA]</scope>
</reference>
<reference key="5">
    <citation type="journal article" date="2004" name="Genome Res.">
        <title>The status, quality, and expansion of the NIH full-length cDNA project: the Mammalian Gene Collection (MGC).</title>
        <authorList>
            <consortium name="The MGC Project Team"/>
        </authorList>
    </citation>
    <scope>NUCLEOTIDE SEQUENCE [LARGE SCALE MRNA]</scope>
    <source>
        <tissue>Eye</tissue>
    </source>
</reference>
<reference key="6">
    <citation type="journal article" date="2003" name="Nat. Biotechnol.">
        <title>Exploring proteomes and analyzing protein processing by mass spectrometric identification of sorted N-terminal peptides.</title>
        <authorList>
            <person name="Gevaert K."/>
            <person name="Goethals M."/>
            <person name="Martens L."/>
            <person name="Van Damme J."/>
            <person name="Staes A."/>
            <person name="Thomas G.R."/>
            <person name="Vandekerckhove J."/>
        </authorList>
    </citation>
    <scope>PROTEIN SEQUENCE OF 1-17</scope>
    <source>
        <tissue>Platelet</tissue>
    </source>
</reference>
<reference key="7">
    <citation type="journal article" date="2001" name="EMBO J.">
        <title>Influenza B virus NS1 protein inhibits conjugation of the interferon (IFN)-induced ubiquitin-like ISG15 protein.</title>
        <authorList>
            <person name="Yuan W."/>
            <person name="Krug R.M."/>
        </authorList>
    </citation>
    <scope>PROTEIN SEQUENCE OF 973-987</scope>
    <scope>INTERACTION WITH G1P2</scope>
    <scope>PATHWAY</scope>
</reference>
<reference key="8">
    <citation type="journal article" date="2005" name="J. Virol.">
        <title>Identification of interferon-stimulated gene 15 as an antiviral molecule during Sindbis virus infection in vivo.</title>
        <authorList>
            <person name="Lenschow D.J."/>
            <person name="Giannakopoulos N.V."/>
            <person name="Gunn L.J."/>
            <person name="Johnston C."/>
            <person name="O'Guin A.K."/>
            <person name="Schmidt R.E."/>
            <person name="Levine B."/>
            <person name="Virgin H.W. IV"/>
        </authorList>
    </citation>
    <scope>FUNCTION</scope>
</reference>
<reference key="9">
    <citation type="journal article" date="2009" name="J. Virol.">
        <title>ISG15 Arg151 and the ISG15-conjugating enzyme UbE1L are important for innate immune control of Sindbis virus.</title>
        <authorList>
            <person name="Giannakopoulos N.V."/>
            <person name="Arutyunova E."/>
            <person name="Lai C."/>
            <person name="Lenschow D.J."/>
            <person name="Haas A.L."/>
            <person name="Virgin H.W."/>
        </authorList>
    </citation>
    <scope>FUNCTION</scope>
</reference>
<reference key="10">
    <citation type="journal article" date="2010" name="Proc. Natl. Acad. Sci. U.S.A.">
        <title>ISG15 conjugation system targets the viral NS1 protein in influenza A virus-infected cells.</title>
        <authorList>
            <person name="Zhao C."/>
            <person name="Hsiang T.Y."/>
            <person name="Kuo R.L."/>
            <person name="Krug R.M."/>
        </authorList>
    </citation>
    <scope>FUNCTION</scope>
</reference>
<reference key="11">
    <citation type="journal article" date="2012" name="PLoS ONE">
        <title>Covalent protein modification with ISG15 via a conserved cysteine in the hinge region.</title>
        <authorList>
            <person name="Bade V.N."/>
            <person name="Nickels J."/>
            <person name="Keusekotten K."/>
            <person name="Praefcke G.J."/>
        </authorList>
    </citation>
    <scope>ISGYLATION</scope>
</reference>
<reference key="12">
    <citation type="journal article" date="2014" name="J. Proteomics">
        <title>An enzyme assisted RP-RPLC approach for in-depth analysis of human liver phosphoproteome.</title>
        <authorList>
            <person name="Bian Y."/>
            <person name="Song C."/>
            <person name="Cheng K."/>
            <person name="Dong M."/>
            <person name="Wang F."/>
            <person name="Huang J."/>
            <person name="Sun D."/>
            <person name="Wang L."/>
            <person name="Ye M."/>
            <person name="Zou H."/>
        </authorList>
    </citation>
    <scope>PHOSPHORYLATION [LARGE SCALE ANALYSIS] AT SER-266</scope>
    <scope>IDENTIFICATION BY MASS SPECTROMETRY [LARGE SCALE ANALYSIS]</scope>
    <source>
        <tissue>Liver</tissue>
    </source>
</reference>
<reference key="13">
    <citation type="journal article" date="2016" name="Nat. Commun.">
        <title>Positive feedback regulation of p53 transactivity by DNA damage-induced ISG15 modification.</title>
        <authorList>
            <person name="Park J.H."/>
            <person name="Yang S.W."/>
            <person name="Park J.M."/>
            <person name="Ka S.H."/>
            <person name="Kim J.H."/>
            <person name="Kong Y.Y."/>
            <person name="Jeon Y.J."/>
            <person name="Seol J.H."/>
            <person name="Chung C.H."/>
        </authorList>
    </citation>
    <scope>FUNCTION</scope>
    <scope>INDUCTION BY DNA DAMAGE</scope>
</reference>
<reference key="14">
    <citation type="journal article" date="2016" name="PLoS Pathog.">
        <title>Consecutive Inhibition of ISG15 Expression and ISGylation by Cytomegalovirus Regulators.</title>
        <authorList>
            <person name="Kim Y.J."/>
            <person name="Kim E.T."/>
            <person name="Kim Y.E."/>
            <person name="Lee M.K."/>
            <person name="Kwon K.M."/>
            <person name="Kim K.I."/>
            <person name="Stamminger T."/>
            <person name="Ahn J.H."/>
        </authorList>
    </citation>
    <scope>FUNCTION</scope>
    <scope>INTERACTION WITH HUMAN CYTOMEGALOVIRUS PROTEIN UL26 (MICROBIAL INFECTION)</scope>
</reference>
<reference key="15">
    <citation type="journal article" date="2017" name="Infect. Genet. Evol.">
        <title>Inhibition of rabies virus replication by interferon-stimulated gene 15 and its activating enzyme UBA7.</title>
        <authorList>
            <person name="Zhao P."/>
            <person name="Jiang T."/>
            <person name="Zhong Z."/>
            <person name="Zhao L."/>
            <person name="Yang S."/>
            <person name="Xia X."/>
        </authorList>
    </citation>
    <scope>FUNCTION</scope>
</reference>
<reference key="16">
    <citation type="journal article" date="2017" name="Int. J. Mol. Med.">
        <title>ISG15 inhibits cancer cell growth and promotes apoptosis.</title>
        <authorList>
            <person name="Zhou M.J."/>
            <person name="Chen F.Z."/>
            <person name="Chen H.C."/>
            <person name="Wan X.X."/>
            <person name="Zhou X."/>
            <person name="Fang Q."/>
            <person name="Zhang D.Z."/>
        </authorList>
    </citation>
    <scope>INDUCTION BY INTERFERON-ALPHA</scope>
</reference>
<reference key="17">
    <citation type="journal article" date="2018" name="J. Virol.">
        <title>Transmembrane Protein pUL50 of Human Cytomegalovirus Inhibits ISGylation by Downregulating UBE1L.</title>
        <authorList>
            <person name="Lee M.K."/>
            <person name="Kim Y.J."/>
            <person name="Kim Y.E."/>
            <person name="Han T.H."/>
            <person name="Milbradt J."/>
            <person name="Marschall M."/>
            <person name="Ahn J.H."/>
        </authorList>
    </citation>
    <scope>FUNCTION</scope>
    <scope>INTERACTION WITH HUMAN CYTOMEGALOVIRUS PROTEIN NEC2/UL50 (MICROBIAL INFECTION)</scope>
    <scope>SUBCELLULAR LOCATION</scope>
    <scope>UBIQUITINATION</scope>
</reference>
<reference key="18">
    <citation type="journal article" date="2023" name="Cell. Signal.">
        <title>Rotavirus circumvents the antiviral effects of protein ISGylation via proteasomal degradation of Ube1L.</title>
        <authorList>
            <person name="Sarkar R."/>
            <person name="Patra U."/>
            <person name="Mukherjee A."/>
            <person name="Mitra S."/>
            <person name="Komoto S."/>
            <person name="Chawla-Sarkar M."/>
        </authorList>
    </citation>
    <scope>FUNCTION</scope>
    <scope>INTERACTION WITH ROTAVIRUS PROTEIN NSP5 (MICROBIAL INFECTION)</scope>
</reference>
<reference key="19">
    <citation type="journal article" date="2018" name="Mol. Psychiatry">
        <title>Mapping autosomal recessive intellectual disability: combined microarray and exome sequencing identifies 26 novel candidate genes in 192 consanguineous families.</title>
        <authorList>
            <person name="Harripaul R."/>
            <person name="Vasli N."/>
            <person name="Mikhailov A."/>
            <person name="Rafiq M.A."/>
            <person name="Mittal K."/>
            <person name="Windpassinger C."/>
            <person name="Sheikh T.I."/>
            <person name="Noor A."/>
            <person name="Mahmood H."/>
            <person name="Downey S."/>
            <person name="Johnson M."/>
            <person name="Vleuten K."/>
            <person name="Bell L."/>
            <person name="Ilyas M."/>
            <person name="Khan F.S."/>
            <person name="Khan V."/>
            <person name="Moradi M."/>
            <person name="Ayaz M."/>
            <person name="Naeem F."/>
            <person name="Heidari A."/>
            <person name="Ahmed I."/>
            <person name="Ghadami S."/>
            <person name="Agha Z."/>
            <person name="Zeinali S."/>
            <person name="Qamar R."/>
            <person name="Mozhdehipanah H."/>
            <person name="John P."/>
            <person name="Mir A."/>
            <person name="Ansar M."/>
            <person name="French L."/>
            <person name="Ayub M."/>
            <person name="Vincent J.B."/>
        </authorList>
    </citation>
    <scope>VARIANT 397-GLU--LEU-1012 DEL</scope>
</reference>
<organism>
    <name type="scientific">Homo sapiens</name>
    <name type="common">Human</name>
    <dbReference type="NCBI Taxonomy" id="9606"/>
    <lineage>
        <taxon>Eukaryota</taxon>
        <taxon>Metazoa</taxon>
        <taxon>Chordata</taxon>
        <taxon>Craniata</taxon>
        <taxon>Vertebrata</taxon>
        <taxon>Euteleostomi</taxon>
        <taxon>Mammalia</taxon>
        <taxon>Eutheria</taxon>
        <taxon>Euarchontoglires</taxon>
        <taxon>Primates</taxon>
        <taxon>Haplorrhini</taxon>
        <taxon>Catarrhini</taxon>
        <taxon>Hominidae</taxon>
        <taxon>Homo</taxon>
    </lineage>
</organism>
<sequence>MDALDASKLLDEELYSRQLYVLGSPAMQRIQGARVLVSGLQGLGAEVAKNLVLMGVGSLTLHDPHPTCWSDLAAQFLLSEQDLERSRAEASQELLAQLNRAVQVVVHTGDITEDLLLDFQVVVLTAAKLEEQLKVGTLCHKHGVCFLAADTRGLVGQLFCDFGEDFTVQDPTEAEPLTAAIQHISQGSPGILTLRKGANTHYFRDGDLVTFSGIEGMVELNDCDPRSIHVREDGSLEIGDTTTFSRYLRGGAITEVKRPKTVRHKSLDTALLQPHVVAQSSQEVHHAHCLHQAFCALHKFQHLHGRPPQPWDPVDAETVVGLARDLEPLKRTEEEPLEEPLDEALVRTVALSSAGVLSPMVAMLGAVAAQEVLKAISRKFMPLDQWLYFDALDCLPEDGELLPSPEDCALRGSRYDGQIAVFGAGFQEKLRRQHYLLVGAGAIGCELLKVFALVGLGAGNSGGLTVVDMDHIERSNLSRQFLFRSQDVGRPKAEVAAAAARGLNPDLQVIPLTYPLDPTTEHIYGDNFFSRVDGVAAALDSFQARRYVAARCTHYLKPLLEAGTSGTWGSATVFMPHVTEAYRAPASAAASEDAPYPVCTVRYFPSTAEHTLQWARHEFEELFRLSAETINHHQQAHTSLADMDEPQTLTLLKPVLGVLRVRPQNWQDCVAWALGHWKLCFHYGIKQLLRHFPPNKVLEDGTPFWSGPKQCPQPLEFDTNQDTHLLYVLAAANLYAQMHGLPGSQDWTALRELLKLLPQPDPQQMAPIFASNLELASASAEFGPEQQKELNKALEVWSVGPPLKPLMFEKDDDSNFHVDFVVAAASLRCQNYGIPPVNRAQSKRIVGQIIPAIATTTAAVAGLLGLELYKVVSGPRPRSAFRHSYLHLAENYLIRYMPFAPAIQTFHHLKWTSWDRLKVPAGQPERTLESLLAHLQEQHGLRVRILLHGSALLYAAGWSPEKQAQHLPLRVTELVQQLTGQAPAPGQRVLVLELSCEGDDEDTAFPPLHYEL</sequence>
<accession>P41226</accession>
<accession>Q9BRB2</accession>
<dbReference type="EC" id="6.2.1.-" evidence="2"/>
<dbReference type="EMBL" id="L13852">
    <property type="protein sequence ID" value="AAA75388.1"/>
    <property type="molecule type" value="mRNA"/>
</dbReference>
<dbReference type="EMBL" id="AF294032">
    <property type="protein sequence ID" value="AAG49557.1"/>
    <property type="molecule type" value="Genomic_DNA"/>
</dbReference>
<dbReference type="EMBL" id="BT007026">
    <property type="protein sequence ID" value="AAP35672.1"/>
    <property type="molecule type" value="mRNA"/>
</dbReference>
<dbReference type="EMBL" id="CH471055">
    <property type="protein sequence ID" value="EAW65023.1"/>
    <property type="molecule type" value="Genomic_DNA"/>
</dbReference>
<dbReference type="EMBL" id="BC006378">
    <property type="protein sequence ID" value="AAH06378.1"/>
    <property type="molecule type" value="mRNA"/>
</dbReference>
<dbReference type="CCDS" id="CCDS2805.1"/>
<dbReference type="RefSeq" id="NP_003326.2">
    <property type="nucleotide sequence ID" value="NM_003335.2"/>
</dbReference>
<dbReference type="PDB" id="8OIF">
    <property type="method" value="EM"/>
    <property type="resolution" value="3.50 A"/>
    <property type="chains" value="A=1-1012"/>
</dbReference>
<dbReference type="PDB" id="8SE9">
    <property type="method" value="EM"/>
    <property type="resolution" value="3.20 A"/>
    <property type="chains" value="A=1-1012"/>
</dbReference>
<dbReference type="PDB" id="8SEA">
    <property type="method" value="EM"/>
    <property type="resolution" value="3.40 A"/>
    <property type="chains" value="A=1-1012"/>
</dbReference>
<dbReference type="PDB" id="8SEB">
    <property type="method" value="EM"/>
    <property type="resolution" value="3.24 A"/>
    <property type="chains" value="A=1-1012"/>
</dbReference>
<dbReference type="PDB" id="8SV8">
    <property type="method" value="EM"/>
    <property type="resolution" value="3.38 A"/>
    <property type="chains" value="A=1-1012"/>
</dbReference>
<dbReference type="PDB" id="8WWX">
    <property type="method" value="NMR"/>
    <property type="chains" value="A=920-1012"/>
</dbReference>
<dbReference type="PDBsum" id="8OIF"/>
<dbReference type="PDBsum" id="8SE9"/>
<dbReference type="PDBsum" id="8SEA"/>
<dbReference type="PDBsum" id="8SEB"/>
<dbReference type="PDBsum" id="8SV8"/>
<dbReference type="PDBsum" id="8WWX"/>
<dbReference type="EMDB" id="EMD-16891"/>
<dbReference type="EMDB" id="EMD-18589"/>
<dbReference type="EMDB" id="EMD-40407"/>
<dbReference type="EMDB" id="EMD-40408"/>
<dbReference type="EMDB" id="EMD-40409"/>
<dbReference type="EMDB" id="EMD-40782"/>
<dbReference type="SMR" id="P41226"/>
<dbReference type="BioGRID" id="113166">
    <property type="interactions" value="16"/>
</dbReference>
<dbReference type="DIP" id="DIP-60526N"/>
<dbReference type="FunCoup" id="P41226">
    <property type="interactions" value="605"/>
</dbReference>
<dbReference type="IntAct" id="P41226">
    <property type="interactions" value="10"/>
</dbReference>
<dbReference type="MINT" id="P41226"/>
<dbReference type="STRING" id="9606.ENSP00000333266"/>
<dbReference type="BindingDB" id="P41226"/>
<dbReference type="ChEMBL" id="CHEMBL2321623"/>
<dbReference type="iPTMnet" id="P41226"/>
<dbReference type="PhosphoSitePlus" id="P41226"/>
<dbReference type="BioMuta" id="UBA7"/>
<dbReference type="DMDM" id="215273977"/>
<dbReference type="jPOST" id="P41226"/>
<dbReference type="MassIVE" id="P41226"/>
<dbReference type="PaxDb" id="9606-ENSP00000333266"/>
<dbReference type="PeptideAtlas" id="P41226"/>
<dbReference type="ProteomicsDB" id="55434"/>
<dbReference type="Pumba" id="P41226"/>
<dbReference type="Antibodypedia" id="4219">
    <property type="antibodies" value="344 antibodies from 36 providers"/>
</dbReference>
<dbReference type="DNASU" id="7318"/>
<dbReference type="Ensembl" id="ENST00000333486.4">
    <property type="protein sequence ID" value="ENSP00000333266.3"/>
    <property type="gene ID" value="ENSG00000182179.13"/>
</dbReference>
<dbReference type="GeneID" id="7318"/>
<dbReference type="KEGG" id="hsa:7318"/>
<dbReference type="MANE-Select" id="ENST00000333486.4">
    <property type="protein sequence ID" value="ENSP00000333266.3"/>
    <property type="RefSeq nucleotide sequence ID" value="NM_003335.3"/>
    <property type="RefSeq protein sequence ID" value="NP_003326.2"/>
</dbReference>
<dbReference type="UCSC" id="uc003cxr.4">
    <property type="organism name" value="human"/>
</dbReference>
<dbReference type="AGR" id="HGNC:12471"/>
<dbReference type="CTD" id="7318"/>
<dbReference type="DisGeNET" id="7318"/>
<dbReference type="GeneCards" id="UBA7"/>
<dbReference type="HGNC" id="HGNC:12471">
    <property type="gene designation" value="UBA7"/>
</dbReference>
<dbReference type="HPA" id="ENSG00000182179">
    <property type="expression patterns" value="Low tissue specificity"/>
</dbReference>
<dbReference type="MalaCards" id="UBA7"/>
<dbReference type="MIM" id="191325">
    <property type="type" value="gene"/>
</dbReference>
<dbReference type="neXtProt" id="NX_P41226"/>
<dbReference type="OpenTargets" id="ENSG00000182179"/>
<dbReference type="PharmGKB" id="PA162407761"/>
<dbReference type="VEuPathDB" id="HostDB:ENSG00000182179"/>
<dbReference type="eggNOG" id="KOG2012">
    <property type="taxonomic scope" value="Eukaryota"/>
</dbReference>
<dbReference type="GeneTree" id="ENSGT00940000161447"/>
<dbReference type="HOGENOM" id="CLU_002556_0_0_1"/>
<dbReference type="InParanoid" id="P41226"/>
<dbReference type="OMA" id="FVSPMQT"/>
<dbReference type="OrthoDB" id="10252231at2759"/>
<dbReference type="PAN-GO" id="P41226">
    <property type="GO annotations" value="5 GO annotations based on evolutionary models"/>
</dbReference>
<dbReference type="PhylomeDB" id="P41226"/>
<dbReference type="TreeFam" id="TF300586"/>
<dbReference type="PathwayCommons" id="P41226"/>
<dbReference type="Reactome" id="R-HSA-1169408">
    <property type="pathway name" value="ISG15 antiviral mechanism"/>
</dbReference>
<dbReference type="Reactome" id="R-HSA-168928">
    <property type="pathway name" value="DDX58/IFIH1-mediated induction of interferon-alpha/beta"/>
</dbReference>
<dbReference type="Reactome" id="R-HSA-5656169">
    <property type="pathway name" value="Termination of translesion DNA synthesis"/>
</dbReference>
<dbReference type="Reactome" id="R-HSA-936440">
    <property type="pathway name" value="Negative regulators of DDX58/IFIH1 signaling"/>
</dbReference>
<dbReference type="Reactome" id="R-HSA-983168">
    <property type="pathway name" value="Antigen processing: Ubiquitination &amp; Proteasome degradation"/>
</dbReference>
<dbReference type="Reactome" id="R-HSA-9909505">
    <property type="pathway name" value="Modulation of host responses by IFN-stimulated genes"/>
</dbReference>
<dbReference type="SignaLink" id="P41226"/>
<dbReference type="UniPathway" id="UPA00143"/>
<dbReference type="BioGRID-ORCS" id="7318">
    <property type="hits" value="10 hits in 1161 CRISPR screens"/>
</dbReference>
<dbReference type="ChiTaRS" id="UBA7">
    <property type="organism name" value="human"/>
</dbReference>
<dbReference type="GeneWiki" id="UBE1L"/>
<dbReference type="GenomeRNAi" id="7318"/>
<dbReference type="Pharos" id="P41226">
    <property type="development level" value="Tbio"/>
</dbReference>
<dbReference type="PRO" id="PR:P41226"/>
<dbReference type="Proteomes" id="UP000005640">
    <property type="component" value="Chromosome 3"/>
</dbReference>
<dbReference type="RNAct" id="P41226">
    <property type="molecule type" value="protein"/>
</dbReference>
<dbReference type="Bgee" id="ENSG00000182179">
    <property type="expression patterns" value="Expressed in granulocyte and 98 other cell types or tissues"/>
</dbReference>
<dbReference type="GO" id="GO:0005737">
    <property type="term" value="C:cytoplasm"/>
    <property type="evidence" value="ECO:0000314"/>
    <property type="project" value="UniProt"/>
</dbReference>
<dbReference type="GO" id="GO:0005829">
    <property type="term" value="C:cytosol"/>
    <property type="evidence" value="ECO:0000304"/>
    <property type="project" value="Reactome"/>
</dbReference>
<dbReference type="GO" id="GO:0005654">
    <property type="term" value="C:nucleoplasm"/>
    <property type="evidence" value="ECO:0000304"/>
    <property type="project" value="Reactome"/>
</dbReference>
<dbReference type="GO" id="GO:0005524">
    <property type="term" value="F:ATP binding"/>
    <property type="evidence" value="ECO:0007669"/>
    <property type="project" value="UniProtKB-KW"/>
</dbReference>
<dbReference type="GO" id="GO:0019782">
    <property type="term" value="F:ISG15 activating enzyme activity"/>
    <property type="evidence" value="ECO:0000314"/>
    <property type="project" value="HGNC-UCL"/>
</dbReference>
<dbReference type="GO" id="GO:0004842">
    <property type="term" value="F:ubiquitin-protein transferase activity"/>
    <property type="evidence" value="ECO:0000269"/>
    <property type="project" value="Reactome"/>
</dbReference>
<dbReference type="GO" id="GO:0006974">
    <property type="term" value="P:DNA damage response"/>
    <property type="evidence" value="ECO:0000318"/>
    <property type="project" value="GO_Central"/>
</dbReference>
<dbReference type="GO" id="GO:0045087">
    <property type="term" value="P:innate immune response"/>
    <property type="evidence" value="ECO:0000314"/>
    <property type="project" value="UniProt"/>
</dbReference>
<dbReference type="GO" id="GO:0032020">
    <property type="term" value="P:ISG15-protein conjugation"/>
    <property type="evidence" value="ECO:0000314"/>
    <property type="project" value="HGNC-UCL"/>
</dbReference>
<dbReference type="GO" id="GO:0019941">
    <property type="term" value="P:modification-dependent protein catabolic process"/>
    <property type="evidence" value="ECO:0007669"/>
    <property type="project" value="Ensembl"/>
</dbReference>
<dbReference type="GO" id="GO:0036211">
    <property type="term" value="P:protein modification process"/>
    <property type="evidence" value="ECO:0000314"/>
    <property type="project" value="HGNC-UCL"/>
</dbReference>
<dbReference type="GO" id="GO:0016567">
    <property type="term" value="P:protein ubiquitination"/>
    <property type="evidence" value="ECO:0007669"/>
    <property type="project" value="UniProtKB-UniPathway"/>
</dbReference>
<dbReference type="CDD" id="cd01491">
    <property type="entry name" value="Ube1_repeat1"/>
    <property type="match status" value="1"/>
</dbReference>
<dbReference type="CDD" id="cd01490">
    <property type="entry name" value="Ube1_repeat2"/>
    <property type="match status" value="1"/>
</dbReference>
<dbReference type="FunFam" id="1.10.10.2660:FF:000004">
    <property type="entry name" value="Ubiquitin activating enzyme 1"/>
    <property type="match status" value="1"/>
</dbReference>
<dbReference type="FunFam" id="2.40.30.180:FF:000001">
    <property type="entry name" value="ubiquitin-like modifier-activating enzyme 1"/>
    <property type="match status" value="1"/>
</dbReference>
<dbReference type="FunFam" id="3.50.50.80:FF:000001">
    <property type="entry name" value="ubiquitin-like modifier-activating enzyme 1"/>
    <property type="match status" value="1"/>
</dbReference>
<dbReference type="FunFam" id="3.10.290.60:FF:000005">
    <property type="entry name" value="Ubiquitin-like modifier-activating enzyme 7"/>
    <property type="match status" value="1"/>
</dbReference>
<dbReference type="FunFam" id="3.40.50.720:FF:000320">
    <property type="entry name" value="ubiquitin-like modifier-activating enzyme 7"/>
    <property type="match status" value="1"/>
</dbReference>
<dbReference type="Gene3D" id="3.40.50.720">
    <property type="entry name" value="NAD(P)-binding Rossmann-like Domain"/>
    <property type="match status" value="1"/>
</dbReference>
<dbReference type="Gene3D" id="2.40.30.180">
    <property type="entry name" value="Ubiquitin-activating enzyme E1, FCCH domain"/>
    <property type="match status" value="1"/>
</dbReference>
<dbReference type="Gene3D" id="3.50.50.80">
    <property type="entry name" value="Ubiquitin-activating enzyme E1, inactive adenylation domain, subdomain 1"/>
    <property type="match status" value="1"/>
</dbReference>
<dbReference type="Gene3D" id="3.40.50.12550">
    <property type="entry name" value="Ubiquitin-activating enzyme E1, inactive adenylation domain, subdomain 2"/>
    <property type="match status" value="1"/>
</dbReference>
<dbReference type="Gene3D" id="1.10.10.2660">
    <property type="entry name" value="Ubiquitin-activating enzyme E1, SCCH domain"/>
    <property type="match status" value="1"/>
</dbReference>
<dbReference type="Gene3D" id="3.10.290.60">
    <property type="entry name" value="Ubiquitin-activating enzyme E1, UFD domain"/>
    <property type="match status" value="1"/>
</dbReference>
<dbReference type="InterPro" id="IPR032420">
    <property type="entry name" value="E1_4HB"/>
</dbReference>
<dbReference type="InterPro" id="IPR032418">
    <property type="entry name" value="E1_FCCH"/>
</dbReference>
<dbReference type="InterPro" id="IPR042302">
    <property type="entry name" value="E1_FCCH_sf"/>
</dbReference>
<dbReference type="InterPro" id="IPR045886">
    <property type="entry name" value="ThiF/MoeB/HesA"/>
</dbReference>
<dbReference type="InterPro" id="IPR000594">
    <property type="entry name" value="ThiF_NAD_FAD-bd"/>
</dbReference>
<dbReference type="InterPro" id="IPR018965">
    <property type="entry name" value="Ub-activating_enz_E1_C"/>
</dbReference>
<dbReference type="InterPro" id="IPR042449">
    <property type="entry name" value="Ub-E1_IAD_1"/>
</dbReference>
<dbReference type="InterPro" id="IPR038252">
    <property type="entry name" value="UBA_E1_C_sf"/>
</dbReference>
<dbReference type="InterPro" id="IPR019572">
    <property type="entry name" value="UBA_E1_SCCH"/>
</dbReference>
<dbReference type="InterPro" id="IPR042063">
    <property type="entry name" value="Ubi_acti_E1_SCCH"/>
</dbReference>
<dbReference type="InterPro" id="IPR035985">
    <property type="entry name" value="Ubiquitin-activating_enz"/>
</dbReference>
<dbReference type="InterPro" id="IPR018075">
    <property type="entry name" value="UBQ-activ_enz_E1"/>
</dbReference>
<dbReference type="InterPro" id="IPR033127">
    <property type="entry name" value="UBQ-activ_enz_E1_Cys_AS"/>
</dbReference>
<dbReference type="InterPro" id="IPR000011">
    <property type="entry name" value="UBQ/SUMO-activ_enz_E1-like"/>
</dbReference>
<dbReference type="NCBIfam" id="TIGR01408">
    <property type="entry name" value="Ube1"/>
    <property type="match status" value="1"/>
</dbReference>
<dbReference type="PANTHER" id="PTHR10953">
    <property type="entry name" value="UBIQUITIN-ACTIVATING ENZYME E1"/>
    <property type="match status" value="1"/>
</dbReference>
<dbReference type="PANTHER" id="PTHR10953:SF143">
    <property type="entry name" value="UBIQUITIN-LIKE MODIFIER-ACTIVATING ENZYME 7"/>
    <property type="match status" value="1"/>
</dbReference>
<dbReference type="Pfam" id="PF16191">
    <property type="entry name" value="E1_4HB"/>
    <property type="match status" value="1"/>
</dbReference>
<dbReference type="Pfam" id="PF16190">
    <property type="entry name" value="E1_FCCH"/>
    <property type="match status" value="1"/>
</dbReference>
<dbReference type="Pfam" id="PF09358">
    <property type="entry name" value="E1_UFD"/>
    <property type="match status" value="1"/>
</dbReference>
<dbReference type="Pfam" id="PF00899">
    <property type="entry name" value="ThiF"/>
    <property type="match status" value="2"/>
</dbReference>
<dbReference type="Pfam" id="PF10585">
    <property type="entry name" value="UBA_E1_SCCH"/>
    <property type="match status" value="1"/>
</dbReference>
<dbReference type="PRINTS" id="PR01849">
    <property type="entry name" value="UBIQUITINACT"/>
</dbReference>
<dbReference type="SMART" id="SM00985">
    <property type="entry name" value="UBA_e1_C"/>
    <property type="match status" value="1"/>
</dbReference>
<dbReference type="SUPFAM" id="SSF69572">
    <property type="entry name" value="Activating enzymes of the ubiquitin-like proteins"/>
    <property type="match status" value="2"/>
</dbReference>
<dbReference type="PROSITE" id="PS00865">
    <property type="entry name" value="UBIQUITIN_ACTIVAT_2"/>
    <property type="match status" value="1"/>
</dbReference>
<protein>
    <recommendedName>
        <fullName>Ubiquitin-like modifier-activating enzyme 7</fullName>
        <shortName>Ubiquitin-activating enzyme 7</shortName>
        <ecNumber evidence="2">6.2.1.-</ecNumber>
    </recommendedName>
    <alternativeName>
        <fullName>D8</fullName>
    </alternativeName>
    <alternativeName>
        <fullName>Ubiquitin-activating enzyme E1 homolog</fullName>
    </alternativeName>
</protein>
<name>UBA7_HUMAN</name>
<keyword id="KW-0002">3D-structure</keyword>
<keyword id="KW-0067">ATP-binding</keyword>
<keyword id="KW-0963">Cytoplasm</keyword>
<keyword id="KW-0903">Direct protein sequencing</keyword>
<keyword id="KW-0945">Host-virus interaction</keyword>
<keyword id="KW-0436">Ligase</keyword>
<keyword id="KW-0547">Nucleotide-binding</keyword>
<keyword id="KW-0539">Nucleus</keyword>
<keyword id="KW-0597">Phosphoprotein</keyword>
<keyword id="KW-1267">Proteomics identification</keyword>
<keyword id="KW-1185">Reference proteome</keyword>
<keyword id="KW-0677">Repeat</keyword>
<keyword id="KW-0832">Ubl conjugation</keyword>
<keyword id="KW-0833">Ubl conjugation pathway</keyword>
<comment type="function">
    <text evidence="5 6 7 9 10 13 14 15">E1-activating enzyme that catalyzes the covalent conjugation of the ubiquitin-like protein product of ISG15 to additional interferon stimulated proteins (ISGs) as well as other cellular proteins such as P53 in a process termed protein ISGylation (PubMed:27545325). Plays an essential role in antiviral immunity together with ISG15 by restricting the replication of many viruses including rabies virus, influenza virus, sindbis virus, rotavirus or human cytomegalovirus (PubMed:16254333, PubMed:19073728, PubMed:29056542, PubMed:29743376, PubMed:37722521). For example, ISG15 modification of influenza A protein NS1 disrupts the association of the NS1 with importin-alpha leading to NS1 nuclear import inhibition (PubMed:20133869). ISGylation of human cytomegalovirs protein UL26 regulates its stability and inhibits its activities to suppress NF-kappa-B signaling (PubMed:27564865).</text>
</comment>
<comment type="pathway">
    <text evidence="4">Protein modification; protein ubiquitination.</text>
</comment>
<comment type="subunit">
    <text evidence="10 14">(Microbial infection) Interacts with human cytomegalovirus proteins NEC2/UL50 and UL26; these interactions inhibit ISGylation and cause proteasomal degradation of UBA7.</text>
</comment>
<comment type="subunit">
    <text evidence="15">(Microbial infection) Interacts with rotavirus non-structural protein 5 (NSP5); this interaction promotes UBA7 proteasomal degradation.</text>
</comment>
<comment type="subunit">
    <text evidence="1">Monomer (By similarity). Binds and is involved in the conjugation of G1P2/ISG15.</text>
</comment>
<comment type="interaction">
    <interactant intactId="EBI-751921">
        <id>P41226</id>
    </interactant>
    <interactant intactId="EBI-746466">
        <id>P05161</id>
        <label>ISG15</label>
    </interactant>
    <organismsDiffer>false</organismsDiffer>
    <experiments>12</experiments>
</comment>
<comment type="interaction">
    <interactant intactId="EBI-751921">
        <id>P41226</id>
    </interactant>
    <interactant intactId="EBI-372899">
        <id>Q13148</id>
        <label>TARDBP</label>
    </interactant>
    <organismsDiffer>false</organismsDiffer>
    <experiments>3</experiments>
</comment>
<comment type="subcellular location">
    <subcellularLocation>
        <location evidence="14">Cytoplasm</location>
    </subcellularLocation>
    <subcellularLocation>
        <location evidence="14">Nucleus</location>
    </subcellularLocation>
</comment>
<comment type="tissue specificity">
    <text>Expressed in a variety of normal and tumor cell types, but is reduced in lung cancer cell lines.</text>
</comment>
<comment type="induction">
    <text evidence="9 11">By DNA damage (PubMed:27545325). Upon interferon-alpha exposure (PubMed:28035359).</text>
</comment>
<comment type="PTM">
    <text evidence="8">ISGylated.</text>
</comment>
<comment type="PTM">
    <text evidence="14">Ubiquitinated by RNF170.</text>
</comment>
<comment type="miscellaneous">
    <text>There are two active sites within the E1 molecule, allowing it to accommodate two ubiquitin moieties at a time, with a new ubiquitin forming an adenylate intermediate as the previous one is transferred to the thiol site.</text>
</comment>
<comment type="similarity">
    <text evidence="17">Belongs to the ubiquitin-activating E1 family.</text>
</comment>
<proteinExistence type="evidence at protein level"/>